<accession>Q99944</accession>
<accession>B0S884</accession>
<accession>G5E9Q0</accession>
<accession>Q5JP23</accession>
<accession>Q5SSX3</accession>
<accession>Q8IV30</accession>
<gene>
    <name type="primary">EGFL8</name>
    <name type="synonym">C6orf8</name>
    <name type="synonym">NG3</name>
    <name type="ORF">UNQ8752/PRO29920</name>
</gene>
<comment type="interaction">
    <interactant intactId="EBI-3924130">
        <id>Q99944</id>
    </interactant>
    <interactant intactId="EBI-11954292">
        <id>Q86V38</id>
        <label>ATN1</label>
    </interactant>
    <organismsDiffer>false</organismsDiffer>
    <experiments>3</experiments>
</comment>
<comment type="interaction">
    <interactant intactId="EBI-3924130">
        <id>Q99944</id>
    </interactant>
    <interactant intactId="EBI-1049597">
        <id>P27797</id>
        <label>CALR</label>
    </interactant>
    <organismsDiffer>false</organismsDiffer>
    <experiments>3</experiments>
</comment>
<comment type="interaction">
    <interactant intactId="EBI-3924130">
        <id>Q99944</id>
    </interactant>
    <interactant intactId="EBI-6875961">
        <id>P02489</id>
        <label>CRYAA</label>
    </interactant>
    <organismsDiffer>false</organismsDiffer>
    <experiments>4</experiments>
</comment>
<comment type="interaction">
    <interactant intactId="EBI-3924130">
        <id>Q99944</id>
    </interactant>
    <interactant intactId="EBI-351007">
        <id>P36957</id>
        <label>DLST</label>
    </interactant>
    <organismsDiffer>false</organismsDiffer>
    <experiments>3</experiments>
</comment>
<comment type="interaction">
    <interactant intactId="EBI-3924130">
        <id>Q99944</id>
    </interactant>
    <interactant intactId="EBI-2565863">
        <id>P00488</id>
        <label>F13A1</label>
    </interactant>
    <organismsDiffer>false</organismsDiffer>
    <experiments>3</experiments>
</comment>
<comment type="interaction">
    <interactant intactId="EBI-3924130">
        <id>Q99944</id>
    </interactant>
    <interactant intactId="EBI-352528">
        <id>P10809</id>
        <label>HSPD1</label>
    </interactant>
    <organismsDiffer>false</organismsDiffer>
    <experiments>3</experiments>
</comment>
<comment type="interaction">
    <interactant intactId="EBI-3924130">
        <id>Q99944</id>
    </interactant>
    <interactant intactId="EBI-1055254">
        <id>Q8WXH2</id>
        <label>JPH3</label>
    </interactant>
    <organismsDiffer>false</organismsDiffer>
    <experiments>3</experiments>
</comment>
<comment type="interaction">
    <interactant intactId="EBI-3924130">
        <id>Q99944</id>
    </interactant>
    <interactant intactId="EBI-1055945">
        <id>Q8TDX7</id>
        <label>NEK7</label>
    </interactant>
    <organismsDiffer>false</organismsDiffer>
    <experiments>3</experiments>
</comment>
<comment type="interaction">
    <interactant intactId="EBI-3924130">
        <id>Q99944</id>
    </interactant>
    <interactant intactId="EBI-716404">
        <id>P16284</id>
        <label>PECAM1</label>
    </interactant>
    <organismsDiffer>false</organismsDiffer>
    <experiments>3</experiments>
</comment>
<comment type="interaction">
    <interactant intactId="EBI-3924130">
        <id>Q99944</id>
    </interactant>
    <interactant intactId="EBI-25896548">
        <id>P04275-2</id>
        <label>VWF</label>
    </interactant>
    <organismsDiffer>false</organismsDiffer>
    <experiments>3</experiments>
</comment>
<comment type="subcellular location">
    <subcellularLocation>
        <location evidence="7">Secreted</location>
    </subcellularLocation>
</comment>
<proteinExistence type="evidence at protein level"/>
<name>EGFL8_HUMAN</name>
<reference key="1">
    <citation type="submission" date="2004-09" db="EMBL/GenBank/DDBJ databases">
        <title>A novel gene regulating tumor angiogenesis.</title>
        <authorList>
            <person name="Tanaka S."/>
        </authorList>
    </citation>
    <scope>NUCLEOTIDE SEQUENCE [MRNA]</scope>
</reference>
<reference key="2">
    <citation type="journal article" date="2003" name="Genome Res.">
        <title>The secreted protein discovery initiative (SPDI), a large-scale effort to identify novel human secreted and transmembrane proteins: a bioinformatics assessment.</title>
        <authorList>
            <person name="Clark H.F."/>
            <person name="Gurney A.L."/>
            <person name="Abaya E."/>
            <person name="Baker K."/>
            <person name="Baldwin D.T."/>
            <person name="Brush J."/>
            <person name="Chen J."/>
            <person name="Chow B."/>
            <person name="Chui C."/>
            <person name="Crowley C."/>
            <person name="Currell B."/>
            <person name="Deuel B."/>
            <person name="Dowd P."/>
            <person name="Eaton D."/>
            <person name="Foster J.S."/>
            <person name="Grimaldi C."/>
            <person name="Gu Q."/>
            <person name="Hass P.E."/>
            <person name="Heldens S."/>
            <person name="Huang A."/>
            <person name="Kim H.S."/>
            <person name="Klimowski L."/>
            <person name="Jin Y."/>
            <person name="Johnson S."/>
            <person name="Lee J."/>
            <person name="Lewis L."/>
            <person name="Liao D."/>
            <person name="Mark M.R."/>
            <person name="Robbie E."/>
            <person name="Sanchez C."/>
            <person name="Schoenfeld J."/>
            <person name="Seshagiri S."/>
            <person name="Simmons L."/>
            <person name="Singh J."/>
            <person name="Smith V."/>
            <person name="Stinson J."/>
            <person name="Vagts A."/>
            <person name="Vandlen R.L."/>
            <person name="Watanabe C."/>
            <person name="Wieand D."/>
            <person name="Woods K."/>
            <person name="Xie M.-H."/>
            <person name="Yansura D.G."/>
            <person name="Yi S."/>
            <person name="Yu G."/>
            <person name="Yuan J."/>
            <person name="Zhang M."/>
            <person name="Zhang Z."/>
            <person name="Goddard A.D."/>
            <person name="Wood W.I."/>
            <person name="Godowski P.J."/>
            <person name="Gray A.M."/>
        </authorList>
    </citation>
    <scope>NUCLEOTIDE SEQUENCE [LARGE SCALE MRNA]</scope>
</reference>
<reference key="3">
    <citation type="journal article" date="2003" name="Genome Res.">
        <title>Analysis of the gene-dense major histocompatibility complex class III region and its comparison to mouse.</title>
        <authorList>
            <person name="Xie T."/>
            <person name="Rowen L."/>
            <person name="Aguado B."/>
            <person name="Ahearn M.E."/>
            <person name="Madan A."/>
            <person name="Qin S."/>
            <person name="Campbell R.D."/>
            <person name="Hood L."/>
        </authorList>
    </citation>
    <scope>NUCLEOTIDE SEQUENCE [LARGE SCALE GENOMIC DNA]</scope>
</reference>
<reference key="4">
    <citation type="submission" date="2005-07" db="EMBL/GenBank/DDBJ databases">
        <authorList>
            <person name="Mural R.J."/>
            <person name="Istrail S."/>
            <person name="Sutton G.G."/>
            <person name="Florea L."/>
            <person name="Halpern A.L."/>
            <person name="Mobarry C.M."/>
            <person name="Lippert R."/>
            <person name="Walenz B."/>
            <person name="Shatkay H."/>
            <person name="Dew I."/>
            <person name="Miller J.R."/>
            <person name="Flanigan M.J."/>
            <person name="Edwards N.J."/>
            <person name="Bolanos R."/>
            <person name="Fasulo D."/>
            <person name="Halldorsson B.V."/>
            <person name="Hannenhalli S."/>
            <person name="Turner R."/>
            <person name="Yooseph S."/>
            <person name="Lu F."/>
            <person name="Nusskern D.R."/>
            <person name="Shue B.C."/>
            <person name="Zheng X.H."/>
            <person name="Zhong F."/>
            <person name="Delcher A.L."/>
            <person name="Huson D.H."/>
            <person name="Kravitz S.A."/>
            <person name="Mouchard L."/>
            <person name="Reinert K."/>
            <person name="Remington K.A."/>
            <person name="Clark A.G."/>
            <person name="Waterman M.S."/>
            <person name="Eichler E.E."/>
            <person name="Adams M.D."/>
            <person name="Hunkapiller M.W."/>
            <person name="Myers E.W."/>
            <person name="Venter J.C."/>
        </authorList>
    </citation>
    <scope>NUCLEOTIDE SEQUENCE [LARGE SCALE GENOMIC DNA]</scope>
</reference>
<reference key="5">
    <citation type="journal article" date="2003" name="Nature">
        <title>The DNA sequence and analysis of human chromosome 6.</title>
        <authorList>
            <person name="Mungall A.J."/>
            <person name="Palmer S.A."/>
            <person name="Sims S.K."/>
            <person name="Edwards C.A."/>
            <person name="Ashurst J.L."/>
            <person name="Wilming L."/>
            <person name="Jones M.C."/>
            <person name="Horton R."/>
            <person name="Hunt S.E."/>
            <person name="Scott C.E."/>
            <person name="Gilbert J.G.R."/>
            <person name="Clamp M.E."/>
            <person name="Bethel G."/>
            <person name="Milne S."/>
            <person name="Ainscough R."/>
            <person name="Almeida J.P."/>
            <person name="Ambrose K.D."/>
            <person name="Andrews T.D."/>
            <person name="Ashwell R.I.S."/>
            <person name="Babbage A.K."/>
            <person name="Bagguley C.L."/>
            <person name="Bailey J."/>
            <person name="Banerjee R."/>
            <person name="Barker D.J."/>
            <person name="Barlow K.F."/>
            <person name="Bates K."/>
            <person name="Beare D.M."/>
            <person name="Beasley H."/>
            <person name="Beasley O."/>
            <person name="Bird C.P."/>
            <person name="Blakey S.E."/>
            <person name="Bray-Allen S."/>
            <person name="Brook J."/>
            <person name="Brown A.J."/>
            <person name="Brown J.Y."/>
            <person name="Burford D.C."/>
            <person name="Burrill W."/>
            <person name="Burton J."/>
            <person name="Carder C."/>
            <person name="Carter N.P."/>
            <person name="Chapman J.C."/>
            <person name="Clark S.Y."/>
            <person name="Clark G."/>
            <person name="Clee C.M."/>
            <person name="Clegg S."/>
            <person name="Cobley V."/>
            <person name="Collier R.E."/>
            <person name="Collins J.E."/>
            <person name="Colman L.K."/>
            <person name="Corby N.R."/>
            <person name="Coville G.J."/>
            <person name="Culley K.M."/>
            <person name="Dhami P."/>
            <person name="Davies J."/>
            <person name="Dunn M."/>
            <person name="Earthrowl M.E."/>
            <person name="Ellington A.E."/>
            <person name="Evans K.A."/>
            <person name="Faulkner L."/>
            <person name="Francis M.D."/>
            <person name="Frankish A."/>
            <person name="Frankland J."/>
            <person name="French L."/>
            <person name="Garner P."/>
            <person name="Garnett J."/>
            <person name="Ghori M.J."/>
            <person name="Gilby L.M."/>
            <person name="Gillson C.J."/>
            <person name="Glithero R.J."/>
            <person name="Grafham D.V."/>
            <person name="Grant M."/>
            <person name="Gribble S."/>
            <person name="Griffiths C."/>
            <person name="Griffiths M.N.D."/>
            <person name="Hall R."/>
            <person name="Halls K.S."/>
            <person name="Hammond S."/>
            <person name="Harley J.L."/>
            <person name="Hart E.A."/>
            <person name="Heath P.D."/>
            <person name="Heathcott R."/>
            <person name="Holmes S.J."/>
            <person name="Howden P.J."/>
            <person name="Howe K.L."/>
            <person name="Howell G.R."/>
            <person name="Huckle E."/>
            <person name="Humphray S.J."/>
            <person name="Humphries M.D."/>
            <person name="Hunt A.R."/>
            <person name="Johnson C.M."/>
            <person name="Joy A.A."/>
            <person name="Kay M."/>
            <person name="Keenan S.J."/>
            <person name="Kimberley A.M."/>
            <person name="King A."/>
            <person name="Laird G.K."/>
            <person name="Langford C."/>
            <person name="Lawlor S."/>
            <person name="Leongamornlert D.A."/>
            <person name="Leversha M."/>
            <person name="Lloyd C.R."/>
            <person name="Lloyd D.M."/>
            <person name="Loveland J.E."/>
            <person name="Lovell J."/>
            <person name="Martin S."/>
            <person name="Mashreghi-Mohammadi M."/>
            <person name="Maslen G.L."/>
            <person name="Matthews L."/>
            <person name="McCann O.T."/>
            <person name="McLaren S.J."/>
            <person name="McLay K."/>
            <person name="McMurray A."/>
            <person name="Moore M.J.F."/>
            <person name="Mullikin J.C."/>
            <person name="Niblett D."/>
            <person name="Nickerson T."/>
            <person name="Novik K.L."/>
            <person name="Oliver K."/>
            <person name="Overton-Larty E.K."/>
            <person name="Parker A."/>
            <person name="Patel R."/>
            <person name="Pearce A.V."/>
            <person name="Peck A.I."/>
            <person name="Phillimore B.J.C.T."/>
            <person name="Phillips S."/>
            <person name="Plumb R.W."/>
            <person name="Porter K.M."/>
            <person name="Ramsey Y."/>
            <person name="Ranby S.A."/>
            <person name="Rice C.M."/>
            <person name="Ross M.T."/>
            <person name="Searle S.M."/>
            <person name="Sehra H.K."/>
            <person name="Sheridan E."/>
            <person name="Skuce C.D."/>
            <person name="Smith S."/>
            <person name="Smith M."/>
            <person name="Spraggon L."/>
            <person name="Squares S.L."/>
            <person name="Steward C.A."/>
            <person name="Sycamore N."/>
            <person name="Tamlyn-Hall G."/>
            <person name="Tester J."/>
            <person name="Theaker A.J."/>
            <person name="Thomas D.W."/>
            <person name="Thorpe A."/>
            <person name="Tracey A."/>
            <person name="Tromans A."/>
            <person name="Tubby B."/>
            <person name="Wall M."/>
            <person name="Wallis J.M."/>
            <person name="West A.P."/>
            <person name="White S.S."/>
            <person name="Whitehead S.L."/>
            <person name="Whittaker H."/>
            <person name="Wild A."/>
            <person name="Willey D.J."/>
            <person name="Wilmer T.E."/>
            <person name="Wood J.M."/>
            <person name="Wray P.W."/>
            <person name="Wyatt J.C."/>
            <person name="Young L."/>
            <person name="Younger R.M."/>
            <person name="Bentley D.R."/>
            <person name="Coulson A."/>
            <person name="Durbin R.M."/>
            <person name="Hubbard T."/>
            <person name="Sulston J.E."/>
            <person name="Dunham I."/>
            <person name="Rogers J."/>
            <person name="Beck S."/>
        </authorList>
    </citation>
    <scope>NUCLEOTIDE SEQUENCE [LARGE SCALE GENOMIC DNA]</scope>
    <scope>VARIANT LYS-86</scope>
</reference>
<reference key="6">
    <citation type="journal article" date="2004" name="Genome Res.">
        <title>The status, quality, and expansion of the NIH full-length cDNA project: the Mammalian Gene Collection (MGC).</title>
        <authorList>
            <consortium name="The MGC Project Team"/>
        </authorList>
    </citation>
    <scope>NUCLEOTIDE SEQUENCE [LARGE SCALE MRNA]</scope>
    <source>
        <tissue>Brain</tissue>
        <tissue>Skin</tissue>
    </source>
</reference>
<reference key="7">
    <citation type="journal article" date="2004" name="Protein Sci.">
        <title>Signal peptide prediction based on analysis of experimentally verified cleavage sites.</title>
        <authorList>
            <person name="Zhang Z."/>
            <person name="Henzel W.J."/>
        </authorList>
    </citation>
    <scope>PROTEIN SEQUENCE OF 26-40</scope>
</reference>
<dbReference type="EMBL" id="AB190520">
    <property type="protein sequence ID" value="BAD51398.1"/>
    <property type="molecule type" value="mRNA"/>
</dbReference>
<dbReference type="EMBL" id="AY358139">
    <property type="protein sequence ID" value="AAQ88506.1"/>
    <property type="molecule type" value="mRNA"/>
</dbReference>
<dbReference type="EMBL" id="U89336">
    <property type="protein sequence ID" value="AAB47494.1"/>
    <property type="molecule type" value="Genomic_DNA"/>
</dbReference>
<dbReference type="EMBL" id="AL662828">
    <property type="status" value="NOT_ANNOTATED_CDS"/>
    <property type="molecule type" value="Genomic_DNA"/>
</dbReference>
<dbReference type="EMBL" id="AL662884">
    <property type="status" value="NOT_ANNOTATED_CDS"/>
    <property type="molecule type" value="Genomic_DNA"/>
</dbReference>
<dbReference type="EMBL" id="AL845464">
    <property type="status" value="NOT_ANNOTATED_CDS"/>
    <property type="molecule type" value="Genomic_DNA"/>
</dbReference>
<dbReference type="EMBL" id="BX284686">
    <property type="status" value="NOT_ANNOTATED_CDS"/>
    <property type="molecule type" value="Genomic_DNA"/>
</dbReference>
<dbReference type="EMBL" id="BX927239">
    <property type="status" value="NOT_ANNOTATED_CDS"/>
    <property type="molecule type" value="Genomic_DNA"/>
</dbReference>
<dbReference type="EMBL" id="CR933878">
    <property type="status" value="NOT_ANNOTATED_CDS"/>
    <property type="molecule type" value="Genomic_DNA"/>
</dbReference>
<dbReference type="EMBL" id="CR812478">
    <property type="status" value="NOT_ANNOTATED_CDS"/>
    <property type="molecule type" value="Genomic_DNA"/>
</dbReference>
<dbReference type="EMBL" id="CH471081">
    <property type="protein sequence ID" value="EAX03598.1"/>
    <property type="molecule type" value="Genomic_DNA"/>
</dbReference>
<dbReference type="EMBL" id="BC035574">
    <property type="protein sequence ID" value="AAH35574.1"/>
    <property type="molecule type" value="mRNA"/>
</dbReference>
<dbReference type="EMBL" id="BC052591">
    <property type="protein sequence ID" value="AAH52591.1"/>
    <property type="molecule type" value="mRNA"/>
</dbReference>
<dbReference type="CCDS" id="CCDS4743.1"/>
<dbReference type="RefSeq" id="NP_085155.1">
    <property type="nucleotide sequence ID" value="NM_030652.4"/>
</dbReference>
<dbReference type="SMR" id="Q99944"/>
<dbReference type="BioGRID" id="123336">
    <property type="interactions" value="58"/>
</dbReference>
<dbReference type="FunCoup" id="Q99944">
    <property type="interactions" value="18"/>
</dbReference>
<dbReference type="IntAct" id="Q99944">
    <property type="interactions" value="57"/>
</dbReference>
<dbReference type="STRING" id="9606.ENSP00000378888"/>
<dbReference type="GlyCosmos" id="Q99944">
    <property type="glycosylation" value="1 site, No reported glycans"/>
</dbReference>
<dbReference type="GlyGen" id="Q99944">
    <property type="glycosylation" value="2 sites"/>
</dbReference>
<dbReference type="iPTMnet" id="Q99944"/>
<dbReference type="PhosphoSitePlus" id="Q99944"/>
<dbReference type="BioMuta" id="EGFL8"/>
<dbReference type="DMDM" id="55584040"/>
<dbReference type="MassIVE" id="Q99944"/>
<dbReference type="PaxDb" id="9606-ENSP00000378888"/>
<dbReference type="PeptideAtlas" id="Q99944"/>
<dbReference type="ProteomicsDB" id="34007"/>
<dbReference type="ProteomicsDB" id="78535"/>
<dbReference type="Antibodypedia" id="34956">
    <property type="antibodies" value="63 antibodies from 21 providers"/>
</dbReference>
<dbReference type="DNASU" id="80864"/>
<dbReference type="Ensembl" id="ENST00000333845.11">
    <property type="protein sequence ID" value="ENSP00000333380.6"/>
    <property type="gene ID" value="ENSG00000241404.7"/>
</dbReference>
<dbReference type="Ensembl" id="ENST00000395512.5">
    <property type="protein sequence ID" value="ENSP00000378888.1"/>
    <property type="gene ID" value="ENSG00000241404.7"/>
</dbReference>
<dbReference type="Ensembl" id="ENST00000399648.5">
    <property type="protein sequence ID" value="ENSP00000382556.1"/>
    <property type="gene ID" value="ENSG00000242038.5"/>
</dbReference>
<dbReference type="Ensembl" id="ENST00000413733.5">
    <property type="protein sequence ID" value="ENSP00000390866.1"/>
    <property type="gene ID" value="ENSG00000239974.6"/>
</dbReference>
<dbReference type="Ensembl" id="ENST00000414111.6">
    <property type="protein sequence ID" value="ENSP00000415577.2"/>
    <property type="gene ID" value="ENSG00000240389.5"/>
</dbReference>
<dbReference type="Ensembl" id="ENST00000418252.5">
    <property type="protein sequence ID" value="ENSP00000414996.1"/>
    <property type="gene ID" value="ENSG00000244444.6"/>
</dbReference>
<dbReference type="Ensembl" id="ENST00000433364.5">
    <property type="protein sequence ID" value="ENSP00000388000.1"/>
    <property type="gene ID" value="ENSG00000240389.5"/>
</dbReference>
<dbReference type="Ensembl" id="ENST00000436155.5">
    <property type="protein sequence ID" value="ENSP00000405502.1"/>
    <property type="gene ID" value="ENSG00000243897.8"/>
</dbReference>
<dbReference type="Ensembl" id="ENST00000443511.6">
    <property type="protein sequence ID" value="ENSP00000394193.2"/>
    <property type="gene ID" value="ENSG00000244444.6"/>
</dbReference>
<dbReference type="Ensembl" id="ENST00000447331.6">
    <property type="protein sequence ID" value="ENSP00000407236.2"/>
    <property type="gene ID" value="ENSG00000242038.5"/>
</dbReference>
<dbReference type="Ensembl" id="ENST00000450526.5">
    <property type="protein sequence ID" value="ENSP00000398893.1"/>
    <property type="gene ID" value="ENSG00000243897.8"/>
</dbReference>
<dbReference type="Ensembl" id="ENST00000452189.6">
    <property type="protein sequence ID" value="ENSP00000397426.2"/>
    <property type="gene ID" value="ENSG00000239974.6"/>
</dbReference>
<dbReference type="Ensembl" id="ENST00000452290.5">
    <property type="protein sequence ID" value="ENSP00000416366.1"/>
    <property type="gene ID" value="ENSG00000240592.5"/>
</dbReference>
<dbReference type="Ensembl" id="ENST00000455889.6">
    <property type="protein sequence ID" value="ENSP00000411023.2"/>
    <property type="gene ID" value="ENSG00000240592.5"/>
</dbReference>
<dbReference type="GeneID" id="80864"/>
<dbReference type="KEGG" id="hsa:80864"/>
<dbReference type="MANE-Select" id="ENST00000333845.11">
    <property type="protein sequence ID" value="ENSP00000333380.6"/>
    <property type="RefSeq nucleotide sequence ID" value="NM_030652.4"/>
    <property type="RefSeq protein sequence ID" value="NP_085155.1"/>
</dbReference>
<dbReference type="UCSC" id="uc003oab.2">
    <property type="organism name" value="human"/>
</dbReference>
<dbReference type="AGR" id="HGNC:13944"/>
<dbReference type="CTD" id="80864"/>
<dbReference type="DisGeNET" id="80864"/>
<dbReference type="GeneCards" id="EGFL8"/>
<dbReference type="HGNC" id="HGNC:13944">
    <property type="gene designation" value="EGFL8"/>
</dbReference>
<dbReference type="HPA" id="ENSG00000241404">
    <property type="expression patterns" value="Low tissue specificity"/>
</dbReference>
<dbReference type="MIM" id="609897">
    <property type="type" value="gene"/>
</dbReference>
<dbReference type="neXtProt" id="NX_Q99944"/>
<dbReference type="OpenTargets" id="ENSG00000241404"/>
<dbReference type="PharmGKB" id="PA38372"/>
<dbReference type="VEuPathDB" id="HostDB:ENSG00000241404"/>
<dbReference type="eggNOG" id="KOG1217">
    <property type="taxonomic scope" value="Eukaryota"/>
</dbReference>
<dbReference type="GeneTree" id="ENSGT00940000162975"/>
<dbReference type="HOGENOM" id="CLU_083642_0_0_1"/>
<dbReference type="InParanoid" id="Q99944"/>
<dbReference type="OMA" id="QPDQCEC"/>
<dbReference type="OrthoDB" id="155976at2759"/>
<dbReference type="PAN-GO" id="Q99944">
    <property type="GO annotations" value="4 GO annotations based on evolutionary models"/>
</dbReference>
<dbReference type="TreeFam" id="TF331360"/>
<dbReference type="PathwayCommons" id="Q99944"/>
<dbReference type="SignaLink" id="Q99944"/>
<dbReference type="BioGRID-ORCS" id="80864">
    <property type="hits" value="13 hits in 1146 CRISPR screens"/>
</dbReference>
<dbReference type="GenomeRNAi" id="80864"/>
<dbReference type="Pharos" id="Q99944">
    <property type="development level" value="Tbio"/>
</dbReference>
<dbReference type="PRO" id="PR:Q99944"/>
<dbReference type="Proteomes" id="UP000005640">
    <property type="component" value="Chromosome 6"/>
</dbReference>
<dbReference type="RNAct" id="Q99944">
    <property type="molecule type" value="protein"/>
</dbReference>
<dbReference type="Bgee" id="ENSG00000241404">
    <property type="expression patterns" value="Expressed in tibial nerve and 92 other cell types or tissues"/>
</dbReference>
<dbReference type="ExpressionAtlas" id="Q99944">
    <property type="expression patterns" value="baseline and differential"/>
</dbReference>
<dbReference type="GO" id="GO:0009986">
    <property type="term" value="C:cell surface"/>
    <property type="evidence" value="ECO:0000318"/>
    <property type="project" value="GO_Central"/>
</dbReference>
<dbReference type="GO" id="GO:0005576">
    <property type="term" value="C:extracellular region"/>
    <property type="evidence" value="ECO:0000318"/>
    <property type="project" value="GO_Central"/>
</dbReference>
<dbReference type="GO" id="GO:0005509">
    <property type="term" value="F:calcium ion binding"/>
    <property type="evidence" value="ECO:0007669"/>
    <property type="project" value="InterPro"/>
</dbReference>
<dbReference type="GO" id="GO:0005102">
    <property type="term" value="F:signaling receptor binding"/>
    <property type="evidence" value="ECO:0000318"/>
    <property type="project" value="GO_Central"/>
</dbReference>
<dbReference type="GO" id="GO:0001570">
    <property type="term" value="P:vasculogenesis"/>
    <property type="evidence" value="ECO:0000318"/>
    <property type="project" value="GO_Central"/>
</dbReference>
<dbReference type="CDD" id="cd00054">
    <property type="entry name" value="EGF_CA"/>
    <property type="match status" value="2"/>
</dbReference>
<dbReference type="FunFam" id="2.10.25.10:FF:000394">
    <property type="entry name" value="Epidermal growth factor-like protein 8"/>
    <property type="match status" value="1"/>
</dbReference>
<dbReference type="FunFam" id="2.10.25.10:FF:000010">
    <property type="entry name" value="Pro-epidermal growth factor"/>
    <property type="match status" value="1"/>
</dbReference>
<dbReference type="Gene3D" id="2.10.25.10">
    <property type="entry name" value="Laminin"/>
    <property type="match status" value="2"/>
</dbReference>
<dbReference type="InterPro" id="IPR050969">
    <property type="entry name" value="Dev_Signal_Modulators"/>
</dbReference>
<dbReference type="InterPro" id="IPR001881">
    <property type="entry name" value="EGF-like_Ca-bd_dom"/>
</dbReference>
<dbReference type="InterPro" id="IPR000742">
    <property type="entry name" value="EGF-like_dom"/>
</dbReference>
<dbReference type="InterPro" id="IPR000152">
    <property type="entry name" value="EGF-type_Asp/Asn_hydroxyl_site"/>
</dbReference>
<dbReference type="InterPro" id="IPR018097">
    <property type="entry name" value="EGF_Ca-bd_CS"/>
</dbReference>
<dbReference type="InterPro" id="IPR011489">
    <property type="entry name" value="EMI_domain"/>
</dbReference>
<dbReference type="InterPro" id="IPR049883">
    <property type="entry name" value="NOTCH1_EGF-like"/>
</dbReference>
<dbReference type="PANTHER" id="PTHR14949">
    <property type="entry name" value="EGF-LIKE-DOMAIN, MULTIPLE 7, 8"/>
    <property type="match status" value="1"/>
</dbReference>
<dbReference type="PANTHER" id="PTHR14949:SF27">
    <property type="entry name" value="EPIDERMAL GROWTH FACTOR-LIKE PROTEIN 8"/>
    <property type="match status" value="1"/>
</dbReference>
<dbReference type="Pfam" id="PF00008">
    <property type="entry name" value="EGF"/>
    <property type="match status" value="1"/>
</dbReference>
<dbReference type="Pfam" id="PF07645">
    <property type="entry name" value="EGF_CA"/>
    <property type="match status" value="1"/>
</dbReference>
<dbReference type="Pfam" id="PF07546">
    <property type="entry name" value="EMI"/>
    <property type="match status" value="1"/>
</dbReference>
<dbReference type="SMART" id="SM00181">
    <property type="entry name" value="EGF"/>
    <property type="match status" value="2"/>
</dbReference>
<dbReference type="SMART" id="SM00179">
    <property type="entry name" value="EGF_CA"/>
    <property type="match status" value="1"/>
</dbReference>
<dbReference type="SUPFAM" id="SSF57196">
    <property type="entry name" value="EGF/Laminin"/>
    <property type="match status" value="2"/>
</dbReference>
<dbReference type="PROSITE" id="PS00010">
    <property type="entry name" value="ASX_HYDROXYL"/>
    <property type="match status" value="1"/>
</dbReference>
<dbReference type="PROSITE" id="PS00022">
    <property type="entry name" value="EGF_1"/>
    <property type="match status" value="1"/>
</dbReference>
<dbReference type="PROSITE" id="PS01186">
    <property type="entry name" value="EGF_2"/>
    <property type="match status" value="1"/>
</dbReference>
<dbReference type="PROSITE" id="PS50026">
    <property type="entry name" value="EGF_3"/>
    <property type="match status" value="2"/>
</dbReference>
<dbReference type="PROSITE" id="PS01187">
    <property type="entry name" value="EGF_CA"/>
    <property type="match status" value="1"/>
</dbReference>
<dbReference type="PROSITE" id="PS51041">
    <property type="entry name" value="EMI"/>
    <property type="match status" value="1"/>
</dbReference>
<evidence type="ECO:0000250" key="1"/>
<evidence type="ECO:0000255" key="2"/>
<evidence type="ECO:0000255" key="3">
    <source>
        <dbReference type="PROSITE-ProRule" id="PRU00076"/>
    </source>
</evidence>
<evidence type="ECO:0000255" key="4">
    <source>
        <dbReference type="PROSITE-ProRule" id="PRU00384"/>
    </source>
</evidence>
<evidence type="ECO:0000269" key="5">
    <source>
    </source>
</evidence>
<evidence type="ECO:0000269" key="6">
    <source>
    </source>
</evidence>
<evidence type="ECO:0000305" key="7"/>
<protein>
    <recommendedName>
        <fullName>Epidermal growth factor-like protein 8</fullName>
        <shortName>EGF-like protein 8</shortName>
    </recommendedName>
    <alternativeName>
        <fullName>Vascular endothelial statin-2</fullName>
        <shortName>VE-statin-2</shortName>
    </alternativeName>
</protein>
<sequence length="293" mass="32262">MGSRAELCTLLGGFSFLLLLIPGEGAKGGSLRESQGVCSKQTLVVPLHYNESYSQPVYKPYLTLCAGRRICSTYRTMYRVMWREVRREVQQTHAVCCQGWKKRHPGALTCEAICAKPCLNGGVCVRPDQCECAPGWGGKHCHVDVDECRTSITLCSHHCFNTAGSFTCGCPHDLVLGVDGRTCMEGSPEPPTSASILSVAVREAEKDERALKQEIHELRGRLERLEQWAGQAGAWVRAVLPVPPEELQPEQVAELWGRGDRIESLSDQVLLLEERLGACSCEDNSLGLGVNHR</sequence>
<keyword id="KW-0106">Calcium</keyword>
<keyword id="KW-0175">Coiled coil</keyword>
<keyword id="KW-0903">Direct protein sequencing</keyword>
<keyword id="KW-1015">Disulfide bond</keyword>
<keyword id="KW-0245">EGF-like domain</keyword>
<keyword id="KW-0325">Glycoprotein</keyword>
<keyword id="KW-1267">Proteomics identification</keyword>
<keyword id="KW-1185">Reference proteome</keyword>
<keyword id="KW-0677">Repeat</keyword>
<keyword id="KW-0964">Secreted</keyword>
<keyword id="KW-0732">Signal</keyword>
<organism>
    <name type="scientific">Homo sapiens</name>
    <name type="common">Human</name>
    <dbReference type="NCBI Taxonomy" id="9606"/>
    <lineage>
        <taxon>Eukaryota</taxon>
        <taxon>Metazoa</taxon>
        <taxon>Chordata</taxon>
        <taxon>Craniata</taxon>
        <taxon>Vertebrata</taxon>
        <taxon>Euteleostomi</taxon>
        <taxon>Mammalia</taxon>
        <taxon>Eutheria</taxon>
        <taxon>Euarchontoglires</taxon>
        <taxon>Primates</taxon>
        <taxon>Haplorrhini</taxon>
        <taxon>Catarrhini</taxon>
        <taxon>Hominidae</taxon>
        <taxon>Homo</taxon>
    </lineage>
</organism>
<feature type="signal peptide" evidence="6">
    <location>
        <begin position="1"/>
        <end position="25"/>
    </location>
</feature>
<feature type="chain" id="PRO_0000007531" description="Epidermal growth factor-like protein 8">
    <location>
        <begin position="26"/>
        <end position="293"/>
    </location>
</feature>
<feature type="domain" description="EMI" evidence="4">
    <location>
        <begin position="34"/>
        <end position="112"/>
    </location>
</feature>
<feature type="domain" description="EGF-like 1" evidence="3">
    <location>
        <begin position="111"/>
        <end position="142"/>
    </location>
</feature>
<feature type="domain" description="EGF-like 2; calcium-binding" evidence="3">
    <location>
        <begin position="144"/>
        <end position="184"/>
    </location>
</feature>
<feature type="coiled-coil region" evidence="2">
    <location>
        <begin position="195"/>
        <end position="232"/>
    </location>
</feature>
<feature type="glycosylation site" description="N-linked (GlcNAc...) asparagine" evidence="2">
    <location>
        <position position="50"/>
    </location>
</feature>
<feature type="disulfide bond" evidence="1">
    <location>
        <begin position="38"/>
        <end position="97"/>
    </location>
</feature>
<feature type="disulfide bond" evidence="1">
    <location>
        <begin position="65"/>
        <end position="71"/>
    </location>
</feature>
<feature type="disulfide bond" evidence="1">
    <location>
        <begin position="96"/>
        <end position="110"/>
    </location>
</feature>
<feature type="disulfide bond" evidence="1">
    <location>
        <begin position="114"/>
        <end position="124"/>
    </location>
</feature>
<feature type="disulfide bond" evidence="1">
    <location>
        <begin position="118"/>
        <end position="130"/>
    </location>
</feature>
<feature type="disulfide bond" evidence="1">
    <location>
        <begin position="132"/>
        <end position="141"/>
    </location>
</feature>
<feature type="disulfide bond" evidence="1">
    <location>
        <begin position="148"/>
        <end position="159"/>
    </location>
</feature>
<feature type="disulfide bond" evidence="1">
    <location>
        <begin position="155"/>
        <end position="168"/>
    </location>
</feature>
<feature type="disulfide bond" evidence="1">
    <location>
        <begin position="170"/>
        <end position="183"/>
    </location>
</feature>
<feature type="sequence variant" id="VAR_019792" description="In dbSNP:rs3096697." evidence="5">
    <original>R</original>
    <variation>K</variation>
    <location>
        <position position="86"/>
    </location>
</feature>
<feature type="sequence variant" id="VAR_019793" description="In dbSNP:rs2071289.">
    <original>A</original>
    <variation>E</variation>
    <location>
        <position position="204"/>
    </location>
</feature>
<feature type="sequence variant" id="VAR_048983" description="In dbSNP:rs35587174.">
    <original>G</original>
    <variation>C</variation>
    <location>
        <position position="277"/>
    </location>
</feature>
<feature type="sequence conflict" description="In Ref. 6; AAH35574." evidence="7" ref="6">
    <original>E</original>
    <variation>Q</variation>
    <location>
        <position position="273"/>
    </location>
</feature>